<reference key="1">
    <citation type="journal article" date="2004" name="Science">
        <title>The genomic sequence of the accidental pathogen Legionella pneumophila.</title>
        <authorList>
            <person name="Chien M."/>
            <person name="Morozova I."/>
            <person name="Shi S."/>
            <person name="Sheng H."/>
            <person name="Chen J."/>
            <person name="Gomez S.M."/>
            <person name="Asamani G."/>
            <person name="Hill K."/>
            <person name="Nuara J."/>
            <person name="Feder M."/>
            <person name="Rineer J."/>
            <person name="Greenberg J.J."/>
            <person name="Steshenko V."/>
            <person name="Park S.H."/>
            <person name="Zhao B."/>
            <person name="Teplitskaya E."/>
            <person name="Edwards J.R."/>
            <person name="Pampou S."/>
            <person name="Georghiou A."/>
            <person name="Chou I.-C."/>
            <person name="Iannuccilli W."/>
            <person name="Ulz M.E."/>
            <person name="Kim D.H."/>
            <person name="Geringer-Sameth A."/>
            <person name="Goldsberry C."/>
            <person name="Morozov P."/>
            <person name="Fischer S.G."/>
            <person name="Segal G."/>
            <person name="Qu X."/>
            <person name="Rzhetsky A."/>
            <person name="Zhang P."/>
            <person name="Cayanis E."/>
            <person name="De Jong P.J."/>
            <person name="Ju J."/>
            <person name="Kalachikov S."/>
            <person name="Shuman H.A."/>
            <person name="Russo J.J."/>
        </authorList>
    </citation>
    <scope>NUCLEOTIDE SEQUENCE [LARGE SCALE GENOMIC DNA]</scope>
    <source>
        <strain>Philadelphia 1 / ATCC 33152 / DSM 7513</strain>
    </source>
</reference>
<comment type="function">
    <text evidence="1">Involved in unsaturated fatty acids biosynthesis. Catalyzes the dehydration of short chain beta-hydroxyacyl-ACPs and long chain saturated and unsaturated beta-hydroxyacyl-ACPs.</text>
</comment>
<comment type="catalytic activity">
    <reaction evidence="1">
        <text>a (3R)-hydroxyacyl-[ACP] = a (2E)-enoyl-[ACP] + H2O</text>
        <dbReference type="Rhea" id="RHEA:13097"/>
        <dbReference type="Rhea" id="RHEA-COMP:9925"/>
        <dbReference type="Rhea" id="RHEA-COMP:9945"/>
        <dbReference type="ChEBI" id="CHEBI:15377"/>
        <dbReference type="ChEBI" id="CHEBI:78784"/>
        <dbReference type="ChEBI" id="CHEBI:78827"/>
        <dbReference type="EC" id="4.2.1.59"/>
    </reaction>
</comment>
<comment type="subcellular location">
    <subcellularLocation>
        <location evidence="1">Cytoplasm</location>
    </subcellularLocation>
</comment>
<comment type="similarity">
    <text evidence="1">Belongs to the thioester dehydratase family. FabZ subfamily.</text>
</comment>
<sequence length="150" mass="17049">MNESIDINQIFTLLPHRYPFILVDRVIDYKVMEYLIAIKNVTINENFFTGHFPGNPIMPGVLMLEALAQACAILASLSRQPKEGHEFLHYFAGIDNARFKQVVTPGDQLRLEVRLAGQKRDFWRMHGEAYIGDKLACSADLLSAAKEIKK</sequence>
<name>FABZ_LEGPH</name>
<dbReference type="EC" id="4.2.1.59" evidence="1"/>
<dbReference type="EMBL" id="AE017354">
    <property type="protein sequence ID" value="AAU26607.1"/>
    <property type="molecule type" value="Genomic_DNA"/>
</dbReference>
<dbReference type="RefSeq" id="WP_010946258.1">
    <property type="nucleotide sequence ID" value="NC_002942.5"/>
</dbReference>
<dbReference type="RefSeq" id="YP_094554.1">
    <property type="nucleotide sequence ID" value="NC_002942.5"/>
</dbReference>
<dbReference type="SMR" id="Q5ZY62"/>
<dbReference type="STRING" id="272624.lpg0510"/>
<dbReference type="PaxDb" id="272624-lpg0510"/>
<dbReference type="GeneID" id="57034510"/>
<dbReference type="KEGG" id="lpn:lpg0510"/>
<dbReference type="PATRIC" id="fig|272624.6.peg.531"/>
<dbReference type="eggNOG" id="COG0764">
    <property type="taxonomic scope" value="Bacteria"/>
</dbReference>
<dbReference type="HOGENOM" id="CLU_078912_1_2_6"/>
<dbReference type="OrthoDB" id="9772788at2"/>
<dbReference type="Proteomes" id="UP000000609">
    <property type="component" value="Chromosome"/>
</dbReference>
<dbReference type="GO" id="GO:0005737">
    <property type="term" value="C:cytoplasm"/>
    <property type="evidence" value="ECO:0007669"/>
    <property type="project" value="UniProtKB-SubCell"/>
</dbReference>
<dbReference type="GO" id="GO:0016020">
    <property type="term" value="C:membrane"/>
    <property type="evidence" value="ECO:0007669"/>
    <property type="project" value="GOC"/>
</dbReference>
<dbReference type="GO" id="GO:0019171">
    <property type="term" value="F:(3R)-hydroxyacyl-[acyl-carrier-protein] dehydratase activity"/>
    <property type="evidence" value="ECO:0007669"/>
    <property type="project" value="UniProtKB-EC"/>
</dbReference>
<dbReference type="GO" id="GO:0006633">
    <property type="term" value="P:fatty acid biosynthetic process"/>
    <property type="evidence" value="ECO:0007669"/>
    <property type="project" value="UniProtKB-UniRule"/>
</dbReference>
<dbReference type="GO" id="GO:0009245">
    <property type="term" value="P:lipid A biosynthetic process"/>
    <property type="evidence" value="ECO:0007669"/>
    <property type="project" value="UniProtKB-UniRule"/>
</dbReference>
<dbReference type="CDD" id="cd01288">
    <property type="entry name" value="FabZ"/>
    <property type="match status" value="1"/>
</dbReference>
<dbReference type="FunFam" id="3.10.129.10:FF:000001">
    <property type="entry name" value="3-hydroxyacyl-[acyl-carrier-protein] dehydratase FabZ"/>
    <property type="match status" value="1"/>
</dbReference>
<dbReference type="Gene3D" id="3.10.129.10">
    <property type="entry name" value="Hotdog Thioesterase"/>
    <property type="match status" value="1"/>
</dbReference>
<dbReference type="HAMAP" id="MF_00406">
    <property type="entry name" value="FabZ"/>
    <property type="match status" value="1"/>
</dbReference>
<dbReference type="InterPro" id="IPR013114">
    <property type="entry name" value="FabA_FabZ"/>
</dbReference>
<dbReference type="InterPro" id="IPR010084">
    <property type="entry name" value="FabZ"/>
</dbReference>
<dbReference type="InterPro" id="IPR029069">
    <property type="entry name" value="HotDog_dom_sf"/>
</dbReference>
<dbReference type="NCBIfam" id="TIGR01750">
    <property type="entry name" value="fabZ"/>
    <property type="match status" value="1"/>
</dbReference>
<dbReference type="NCBIfam" id="NF000582">
    <property type="entry name" value="PRK00006.1"/>
    <property type="match status" value="1"/>
</dbReference>
<dbReference type="PANTHER" id="PTHR30272">
    <property type="entry name" value="3-HYDROXYACYL-[ACYL-CARRIER-PROTEIN] DEHYDRATASE"/>
    <property type="match status" value="1"/>
</dbReference>
<dbReference type="PANTHER" id="PTHR30272:SF1">
    <property type="entry name" value="3-HYDROXYACYL-[ACYL-CARRIER-PROTEIN] DEHYDRATASE"/>
    <property type="match status" value="1"/>
</dbReference>
<dbReference type="Pfam" id="PF07977">
    <property type="entry name" value="FabA"/>
    <property type="match status" value="1"/>
</dbReference>
<dbReference type="SUPFAM" id="SSF54637">
    <property type="entry name" value="Thioesterase/thiol ester dehydrase-isomerase"/>
    <property type="match status" value="1"/>
</dbReference>
<organism>
    <name type="scientific">Legionella pneumophila subsp. pneumophila (strain Philadelphia 1 / ATCC 33152 / DSM 7513)</name>
    <dbReference type="NCBI Taxonomy" id="272624"/>
    <lineage>
        <taxon>Bacteria</taxon>
        <taxon>Pseudomonadati</taxon>
        <taxon>Pseudomonadota</taxon>
        <taxon>Gammaproteobacteria</taxon>
        <taxon>Legionellales</taxon>
        <taxon>Legionellaceae</taxon>
        <taxon>Legionella</taxon>
    </lineage>
</organism>
<accession>Q5ZY62</accession>
<gene>
    <name evidence="1" type="primary">fabZ</name>
    <name type="ordered locus">lpg0510</name>
</gene>
<proteinExistence type="inferred from homology"/>
<feature type="chain" id="PRO_0000091695" description="3-hydroxyacyl-[acyl-carrier-protein] dehydratase FabZ">
    <location>
        <begin position="1"/>
        <end position="150"/>
    </location>
</feature>
<feature type="active site" evidence="1">
    <location>
        <position position="51"/>
    </location>
</feature>
<protein>
    <recommendedName>
        <fullName evidence="1">3-hydroxyacyl-[acyl-carrier-protein] dehydratase FabZ</fullName>
        <ecNumber evidence="1">4.2.1.59</ecNumber>
    </recommendedName>
    <alternativeName>
        <fullName evidence="1">(3R)-hydroxymyristoyl-[acyl-carrier-protein] dehydratase</fullName>
        <shortName evidence="1">(3R)-hydroxymyristoyl-ACP dehydrase</shortName>
    </alternativeName>
    <alternativeName>
        <fullName evidence="1">Beta-hydroxyacyl-ACP dehydratase</fullName>
    </alternativeName>
</protein>
<evidence type="ECO:0000255" key="1">
    <source>
        <dbReference type="HAMAP-Rule" id="MF_00406"/>
    </source>
</evidence>
<keyword id="KW-0963">Cytoplasm</keyword>
<keyword id="KW-0441">Lipid A biosynthesis</keyword>
<keyword id="KW-0444">Lipid biosynthesis</keyword>
<keyword id="KW-0443">Lipid metabolism</keyword>
<keyword id="KW-0456">Lyase</keyword>
<keyword id="KW-1185">Reference proteome</keyword>